<keyword id="KW-1185">Reference proteome</keyword>
<evidence type="ECO:0000305" key="1"/>
<comment type="similarity">
    <text evidence="1">Belongs to the Rv1128c/1148c/1588c/1702c/1945/3466 family.</text>
</comment>
<organism>
    <name type="scientific">Mycobacterium tuberculosis (strain CDC 1551 / Oshkosh)</name>
    <dbReference type="NCBI Taxonomy" id="83331"/>
    <lineage>
        <taxon>Bacteria</taxon>
        <taxon>Bacillati</taxon>
        <taxon>Actinomycetota</taxon>
        <taxon>Actinomycetes</taxon>
        <taxon>Mycobacteriales</taxon>
        <taxon>Mycobacteriaceae</taxon>
        <taxon>Mycobacterium</taxon>
        <taxon>Mycobacterium tuberculosis complex</taxon>
    </lineage>
</organism>
<reference key="1">
    <citation type="journal article" date="2002" name="J. Bacteriol.">
        <title>Whole-genome comparison of Mycobacterium tuberculosis clinical and laboratory strains.</title>
        <authorList>
            <person name="Fleischmann R.D."/>
            <person name="Alland D."/>
            <person name="Eisen J.A."/>
            <person name="Carpenter L."/>
            <person name="White O."/>
            <person name="Peterson J.D."/>
            <person name="DeBoy R.T."/>
            <person name="Dodson R.J."/>
            <person name="Gwinn M.L."/>
            <person name="Haft D.H."/>
            <person name="Hickey E.K."/>
            <person name="Kolonay J.F."/>
            <person name="Nelson W.C."/>
            <person name="Umayam L.A."/>
            <person name="Ermolaeva M.D."/>
            <person name="Salzberg S.L."/>
            <person name="Delcher A."/>
            <person name="Utterback T.R."/>
            <person name="Weidman J.F."/>
            <person name="Khouri H.M."/>
            <person name="Gill J."/>
            <person name="Mikula A."/>
            <person name="Bishai W."/>
            <person name="Jacobs W.R. Jr."/>
            <person name="Venter J.C."/>
            <person name="Fraser C.M."/>
        </authorList>
    </citation>
    <scope>NUCLEOTIDE SEQUENCE [LARGE SCALE GENOMIC DNA]</scope>
    <source>
        <strain>CDC 1551 / Oshkosh</strain>
    </source>
</reference>
<name>Y1128_MYCTO</name>
<feature type="chain" id="PRO_0000427362" description="Uncharacterized protein MT1160">
    <location>
        <begin position="1"/>
        <end position="420"/>
    </location>
</feature>
<proteinExistence type="inferred from homology"/>
<gene>
    <name type="ordered locus">MT1160</name>
</gene>
<protein>
    <recommendedName>
        <fullName>Uncharacterized protein MT1160</fullName>
    </recommendedName>
</protein>
<dbReference type="EMBL" id="AE000516">
    <property type="protein sequence ID" value="AAK45417.1"/>
    <property type="molecule type" value="Genomic_DNA"/>
</dbReference>
<dbReference type="PIR" id="A70539">
    <property type="entry name" value="A70539"/>
</dbReference>
<dbReference type="KEGG" id="mtc:MT1160"/>
<dbReference type="PATRIC" id="fig|83331.31.peg.1255"/>
<dbReference type="HOGENOM" id="CLU_022065_0_0_11"/>
<dbReference type="Proteomes" id="UP000001020">
    <property type="component" value="Chromosome"/>
</dbReference>
<dbReference type="CDD" id="cd00085">
    <property type="entry name" value="HNHc"/>
    <property type="match status" value="1"/>
</dbReference>
<dbReference type="InterPro" id="IPR003870">
    <property type="entry name" value="DUF222"/>
</dbReference>
<dbReference type="InterPro" id="IPR003615">
    <property type="entry name" value="HNH_nuc"/>
</dbReference>
<dbReference type="Pfam" id="PF02720">
    <property type="entry name" value="DUF222"/>
    <property type="match status" value="1"/>
</dbReference>
<dbReference type="SMART" id="SM00507">
    <property type="entry name" value="HNHc"/>
    <property type="match status" value="1"/>
</dbReference>
<accession>P9WM56</accession>
<accession>L0T8R4</accession>
<accession>O06580</accession>
<sequence length="420" mass="45655">MCSTREEITEAFASLATALSRVLGLTFDALTTPERLALLEHCETARRQLPSVEHTLINQIGEQSTEEELGGKLGLTLADRLRITRSEAKRRVAEAADLGQRRALTGEPLPPLLTATAKAQRHGLIGDGHVEVIRAFVHRLPSWVDLKTLEKAERDLAKQATQYRPDQLAKLAARIMDCLNPDGDYTDEDRARRRGLTLGKQDVDGMSRLSGYVTPELRATIEAVWAKLAAPGMCNPEQKAPCVNGAPSKEQARRDTRSCPQRNHDALNAGLRSLLTSGNLGQHNGLPASIIVTTTLKDLEAAAGAGLTGGGTILPISDVIRLARHANHYLAIFDRGKALALYHTKRLASPAQRIMLYAKDSGCSAPGCDVPGYYCEVHHVTPYAQCRNTDVNDLTLGCGGHHPLAERGWTTRKNAHGDTE</sequence>